<organism>
    <name type="scientific">Cryptococcus neoformans var. neoformans serotype D (strain JEC21 / ATCC MYA-565)</name>
    <name type="common">Filobasidiella neoformans</name>
    <dbReference type="NCBI Taxonomy" id="214684"/>
    <lineage>
        <taxon>Eukaryota</taxon>
        <taxon>Fungi</taxon>
        <taxon>Dikarya</taxon>
        <taxon>Basidiomycota</taxon>
        <taxon>Agaricomycotina</taxon>
        <taxon>Tremellomycetes</taxon>
        <taxon>Tremellales</taxon>
        <taxon>Cryptococcaceae</taxon>
        <taxon>Cryptococcus</taxon>
        <taxon>Cryptococcus neoformans species complex</taxon>
    </lineage>
</organism>
<dbReference type="EMBL" id="AE017346">
    <property type="protein sequence ID" value="AAW43944.1"/>
    <property type="molecule type" value="Genomic_DNA"/>
</dbReference>
<dbReference type="RefSeq" id="XP_571251.1">
    <property type="nucleotide sequence ID" value="XM_571251.1"/>
</dbReference>
<dbReference type="SMR" id="P0CR78"/>
<dbReference type="FunCoup" id="P0CR78">
    <property type="interactions" value="186"/>
</dbReference>
<dbReference type="STRING" id="214684.P0CR78"/>
<dbReference type="PaxDb" id="214684-P0CR78"/>
<dbReference type="EnsemblFungi" id="AAW43944">
    <property type="protein sequence ID" value="AAW43944"/>
    <property type="gene ID" value="CNF00910"/>
</dbReference>
<dbReference type="GeneID" id="3258098"/>
<dbReference type="KEGG" id="cne:CNF00910"/>
<dbReference type="VEuPathDB" id="FungiDB:CNF00910"/>
<dbReference type="eggNOG" id="KOG2199">
    <property type="taxonomic scope" value="Eukaryota"/>
</dbReference>
<dbReference type="HOGENOM" id="CLU_010104_1_1_1"/>
<dbReference type="InParanoid" id="P0CR78"/>
<dbReference type="OMA" id="QVYRDWW"/>
<dbReference type="OrthoDB" id="10255964at2759"/>
<dbReference type="Proteomes" id="UP000002149">
    <property type="component" value="Chromosome 6"/>
</dbReference>
<dbReference type="GO" id="GO:0010008">
    <property type="term" value="C:endosome membrane"/>
    <property type="evidence" value="ECO:0007669"/>
    <property type="project" value="UniProtKB-SubCell"/>
</dbReference>
<dbReference type="GO" id="GO:0033565">
    <property type="term" value="C:ESCRT-0 complex"/>
    <property type="evidence" value="ECO:0000318"/>
    <property type="project" value="GO_Central"/>
</dbReference>
<dbReference type="GO" id="GO:0035091">
    <property type="term" value="F:phosphatidylinositol binding"/>
    <property type="evidence" value="ECO:0007669"/>
    <property type="project" value="InterPro"/>
</dbReference>
<dbReference type="GO" id="GO:0043130">
    <property type="term" value="F:ubiquitin binding"/>
    <property type="evidence" value="ECO:0007669"/>
    <property type="project" value="InterPro"/>
</dbReference>
<dbReference type="GO" id="GO:0043328">
    <property type="term" value="P:protein transport to vacuole involved in ubiquitin-dependent protein catabolic process via the multivesicular body sorting pathway"/>
    <property type="evidence" value="ECO:0000318"/>
    <property type="project" value="GO_Central"/>
</dbReference>
<dbReference type="CDD" id="cd21386">
    <property type="entry name" value="GAT_Hse1"/>
    <property type="match status" value="1"/>
</dbReference>
<dbReference type="CDD" id="cd16978">
    <property type="entry name" value="VHS_HSE1"/>
    <property type="match status" value="1"/>
</dbReference>
<dbReference type="Gene3D" id="1.20.5.1940">
    <property type="match status" value="1"/>
</dbReference>
<dbReference type="Gene3D" id="1.25.40.90">
    <property type="match status" value="1"/>
</dbReference>
<dbReference type="Gene3D" id="2.30.30.40">
    <property type="entry name" value="SH3 Domains"/>
    <property type="match status" value="1"/>
</dbReference>
<dbReference type="InterPro" id="IPR008942">
    <property type="entry name" value="ENTH_VHS"/>
</dbReference>
<dbReference type="InterPro" id="IPR036028">
    <property type="entry name" value="SH3-like_dom_sf"/>
</dbReference>
<dbReference type="InterPro" id="IPR001452">
    <property type="entry name" value="SH3_domain"/>
</dbReference>
<dbReference type="InterPro" id="IPR050670">
    <property type="entry name" value="STAM"/>
</dbReference>
<dbReference type="InterPro" id="IPR003903">
    <property type="entry name" value="UIM_dom"/>
</dbReference>
<dbReference type="InterPro" id="IPR002014">
    <property type="entry name" value="VHS_dom"/>
</dbReference>
<dbReference type="PANTHER" id="PTHR45929">
    <property type="entry name" value="JAK PATHWAY SIGNAL TRANSDUCTION ADAPTOR MOLECULE"/>
    <property type="match status" value="1"/>
</dbReference>
<dbReference type="PANTHER" id="PTHR45929:SF3">
    <property type="entry name" value="JAK PATHWAY SIGNAL TRANSDUCTION ADAPTOR MOLECULE"/>
    <property type="match status" value="1"/>
</dbReference>
<dbReference type="Pfam" id="PF00018">
    <property type="entry name" value="SH3_1"/>
    <property type="match status" value="1"/>
</dbReference>
<dbReference type="Pfam" id="PF00790">
    <property type="entry name" value="VHS"/>
    <property type="match status" value="1"/>
</dbReference>
<dbReference type="PRINTS" id="PR00499">
    <property type="entry name" value="P67PHOX"/>
</dbReference>
<dbReference type="PRINTS" id="PR00452">
    <property type="entry name" value="SH3DOMAIN"/>
</dbReference>
<dbReference type="SMART" id="SM00326">
    <property type="entry name" value="SH3"/>
    <property type="match status" value="1"/>
</dbReference>
<dbReference type="SMART" id="SM00288">
    <property type="entry name" value="VHS"/>
    <property type="match status" value="1"/>
</dbReference>
<dbReference type="SUPFAM" id="SSF48464">
    <property type="entry name" value="ENTH/VHS domain"/>
    <property type="match status" value="1"/>
</dbReference>
<dbReference type="SUPFAM" id="SSF50044">
    <property type="entry name" value="SH3-domain"/>
    <property type="match status" value="1"/>
</dbReference>
<dbReference type="PROSITE" id="PS50002">
    <property type="entry name" value="SH3"/>
    <property type="match status" value="1"/>
</dbReference>
<dbReference type="PROSITE" id="PS50330">
    <property type="entry name" value="UIM"/>
    <property type="match status" value="1"/>
</dbReference>
<dbReference type="PROSITE" id="PS50179">
    <property type="entry name" value="VHS"/>
    <property type="match status" value="1"/>
</dbReference>
<gene>
    <name type="primary">HSE1</name>
    <name type="ordered locus">CNF00910</name>
</gene>
<comment type="function">
    <text evidence="1">Component of the ESCRT-0 complex which is the sorting receptor for ubiquitinated cargo proteins at the multivesicular body (MVB).</text>
</comment>
<comment type="subunit">
    <text evidence="1">Component of the ESCRT-0 complex composed of HSE1 and VPS27.</text>
</comment>
<comment type="subcellular location">
    <subcellularLocation>
        <location evidence="1">Endosome membrane</location>
        <topology evidence="1">Peripheral membrane protein</topology>
        <orientation evidence="1">Cytoplasmic side</orientation>
    </subcellularLocation>
</comment>
<comment type="similarity">
    <text evidence="6">Belongs to the STAM family.</text>
</comment>
<feature type="chain" id="PRO_0000292494" description="Class E vacuolar protein-sorting machinery protein HSE1">
    <location>
        <begin position="1"/>
        <end position="660"/>
    </location>
</feature>
<feature type="domain" description="VHS" evidence="4">
    <location>
        <begin position="16"/>
        <end position="148"/>
    </location>
</feature>
<feature type="domain" description="UIM" evidence="3">
    <location>
        <begin position="164"/>
        <end position="183"/>
    </location>
</feature>
<feature type="domain" description="SH3" evidence="2">
    <location>
        <begin position="257"/>
        <end position="316"/>
    </location>
</feature>
<feature type="region of interest" description="Disordered" evidence="5">
    <location>
        <begin position="146"/>
        <end position="254"/>
    </location>
</feature>
<feature type="region of interest" description="Disordered" evidence="5">
    <location>
        <begin position="437"/>
        <end position="660"/>
    </location>
</feature>
<feature type="compositionally biased region" description="Basic and acidic residues" evidence="5">
    <location>
        <begin position="158"/>
        <end position="182"/>
    </location>
</feature>
<feature type="compositionally biased region" description="Low complexity" evidence="5">
    <location>
        <begin position="190"/>
        <end position="230"/>
    </location>
</feature>
<feature type="compositionally biased region" description="Low complexity" evidence="5">
    <location>
        <begin position="437"/>
        <end position="503"/>
    </location>
</feature>
<feature type="compositionally biased region" description="Polar residues" evidence="5">
    <location>
        <begin position="517"/>
        <end position="533"/>
    </location>
</feature>
<feature type="compositionally biased region" description="Low complexity" evidence="5">
    <location>
        <begin position="573"/>
        <end position="623"/>
    </location>
</feature>
<feature type="compositionally biased region" description="Low complexity" evidence="5">
    <location>
        <begin position="638"/>
        <end position="651"/>
    </location>
</feature>
<protein>
    <recommendedName>
        <fullName>Class E vacuolar protein-sorting machinery protein HSE1</fullName>
    </recommendedName>
</protein>
<evidence type="ECO:0000250" key="1"/>
<evidence type="ECO:0000255" key="2">
    <source>
        <dbReference type="PROSITE-ProRule" id="PRU00192"/>
    </source>
</evidence>
<evidence type="ECO:0000255" key="3">
    <source>
        <dbReference type="PROSITE-ProRule" id="PRU00213"/>
    </source>
</evidence>
<evidence type="ECO:0000255" key="4">
    <source>
        <dbReference type="PROSITE-ProRule" id="PRU00218"/>
    </source>
</evidence>
<evidence type="ECO:0000256" key="5">
    <source>
        <dbReference type="SAM" id="MobiDB-lite"/>
    </source>
</evidence>
<evidence type="ECO:0000305" key="6"/>
<sequence>MFSTAASPYDDLVIKATDENLASEDWALNMDVCDKVSSDGQNGARQAVTALQKRLSHRNPNVQIYALELANSLAQNCGKDLLGELSSRNWTSALDRLINDRATSTPVKKKALSFVKSWAKQIEETGDPNLGLMGELYDQLRAKNHVFDEPEPTPESAEEVRRRQEEEELQRVLELSKQDKGGRSLFTYQPSGSAGASSSSAANNNTSPSIPQSQAQPLAQDQAQSQAAPQVTGYAPQPQKIYSPQPLEPEPPRVDLNTATRVRAIYPFTGQEVGELDFERGDVIKVLDRGFKEWWRGACNGKIGIFPVTYVEALPEPTPKELQEKAQEEARVFASLGLVDQLLQTLKGIDPARGDKLDDHPEIEEMYQASVALQGQINTLIKKYSDQKAELEHMNANFIRAMGQYEELRNGPPLVQAQPFGYVPPQPQPLLQQQNSYSYQQYPQQPQQQPQPYAQAPYAQQAQPQLQPEQYAQQTPSPAAQSQASYTAQQQPYPAQVQQDPAAASPPPNQPFYHHGGSTTSVNRIPSAQTAVQPQPHGAPSFPPSSPPTRQVTEPGVAGLGAGDQQAWDQYYQQHGQQAPHSSQHPSQPQSQPQSQPQSQPQSQQGSYYPAHAQAQGYQAAYATVPDGRAYASPPLPGTQQGQGVEGVTAGMDRMSVHAP</sequence>
<reference key="1">
    <citation type="journal article" date="2005" name="Science">
        <title>The genome of the basidiomycetous yeast and human pathogen Cryptococcus neoformans.</title>
        <authorList>
            <person name="Loftus B.J."/>
            <person name="Fung E."/>
            <person name="Roncaglia P."/>
            <person name="Rowley D."/>
            <person name="Amedeo P."/>
            <person name="Bruno D."/>
            <person name="Vamathevan J."/>
            <person name="Miranda M."/>
            <person name="Anderson I.J."/>
            <person name="Fraser J.A."/>
            <person name="Allen J.E."/>
            <person name="Bosdet I.E."/>
            <person name="Brent M.R."/>
            <person name="Chiu R."/>
            <person name="Doering T.L."/>
            <person name="Donlin M.J."/>
            <person name="D'Souza C.A."/>
            <person name="Fox D.S."/>
            <person name="Grinberg V."/>
            <person name="Fu J."/>
            <person name="Fukushima M."/>
            <person name="Haas B.J."/>
            <person name="Huang J.C."/>
            <person name="Janbon G."/>
            <person name="Jones S.J.M."/>
            <person name="Koo H.L."/>
            <person name="Krzywinski M.I."/>
            <person name="Kwon-Chung K.J."/>
            <person name="Lengeler K.B."/>
            <person name="Maiti R."/>
            <person name="Marra M.A."/>
            <person name="Marra R.E."/>
            <person name="Mathewson C.A."/>
            <person name="Mitchell T.G."/>
            <person name="Pertea M."/>
            <person name="Riggs F.R."/>
            <person name="Salzberg S.L."/>
            <person name="Schein J.E."/>
            <person name="Shvartsbeyn A."/>
            <person name="Shin H."/>
            <person name="Shumway M."/>
            <person name="Specht C.A."/>
            <person name="Suh B.B."/>
            <person name="Tenney A."/>
            <person name="Utterback T.R."/>
            <person name="Wickes B.L."/>
            <person name="Wortman J.R."/>
            <person name="Wye N.H."/>
            <person name="Kronstad J.W."/>
            <person name="Lodge J.K."/>
            <person name="Heitman J."/>
            <person name="Davis R.W."/>
            <person name="Fraser C.M."/>
            <person name="Hyman R.W."/>
        </authorList>
    </citation>
    <scope>NUCLEOTIDE SEQUENCE [LARGE SCALE GENOMIC DNA]</scope>
    <source>
        <strain>JEC21 / ATCC MYA-565</strain>
    </source>
</reference>
<proteinExistence type="inferred from homology"/>
<name>HSE1_CRYNJ</name>
<keyword id="KW-0967">Endosome</keyword>
<keyword id="KW-0472">Membrane</keyword>
<keyword id="KW-0653">Protein transport</keyword>
<keyword id="KW-1185">Reference proteome</keyword>
<keyword id="KW-0728">SH3 domain</keyword>
<keyword id="KW-0813">Transport</keyword>
<accession>P0CR78</accession>
<accession>Q55QF9</accession>
<accession>Q5KFQ8</accession>